<protein>
    <recommendedName>
        <fullName evidence="1">Large ribosomal subunit protein uL5</fullName>
    </recommendedName>
    <alternativeName>
        <fullName evidence="2">50S ribosomal protein L5</fullName>
    </alternativeName>
</protein>
<evidence type="ECO:0000255" key="1">
    <source>
        <dbReference type="HAMAP-Rule" id="MF_01333"/>
    </source>
</evidence>
<evidence type="ECO:0000305" key="2"/>
<dbReference type="EMBL" id="AE003852">
    <property type="protein sequence ID" value="AAF95725.1"/>
    <property type="molecule type" value="Genomic_DNA"/>
</dbReference>
<dbReference type="PIR" id="B82058">
    <property type="entry name" value="B82058"/>
</dbReference>
<dbReference type="RefSeq" id="NP_232212.1">
    <property type="nucleotide sequence ID" value="NC_002505.1"/>
</dbReference>
<dbReference type="RefSeq" id="WP_001096208.1">
    <property type="nucleotide sequence ID" value="NZ_LT906614.1"/>
</dbReference>
<dbReference type="SMR" id="Q9KNZ6"/>
<dbReference type="STRING" id="243277.VC_2584"/>
<dbReference type="DNASU" id="2615601"/>
<dbReference type="EnsemblBacteria" id="AAF95725">
    <property type="protein sequence ID" value="AAF95725"/>
    <property type="gene ID" value="VC_2584"/>
</dbReference>
<dbReference type="GeneID" id="94012764"/>
<dbReference type="KEGG" id="vch:VC_2584"/>
<dbReference type="PATRIC" id="fig|243277.26.peg.2463"/>
<dbReference type="eggNOG" id="COG0094">
    <property type="taxonomic scope" value="Bacteria"/>
</dbReference>
<dbReference type="HOGENOM" id="CLU_061015_2_1_6"/>
<dbReference type="Proteomes" id="UP000000584">
    <property type="component" value="Chromosome 1"/>
</dbReference>
<dbReference type="GO" id="GO:0022625">
    <property type="term" value="C:cytosolic large ribosomal subunit"/>
    <property type="evidence" value="ECO:0000318"/>
    <property type="project" value="GO_Central"/>
</dbReference>
<dbReference type="GO" id="GO:0003723">
    <property type="term" value="F:RNA binding"/>
    <property type="evidence" value="ECO:0000318"/>
    <property type="project" value="GO_Central"/>
</dbReference>
<dbReference type="GO" id="GO:0019843">
    <property type="term" value="F:rRNA binding"/>
    <property type="evidence" value="ECO:0007669"/>
    <property type="project" value="UniProtKB-UniRule"/>
</dbReference>
<dbReference type="GO" id="GO:0003735">
    <property type="term" value="F:structural constituent of ribosome"/>
    <property type="evidence" value="ECO:0000318"/>
    <property type="project" value="GO_Central"/>
</dbReference>
<dbReference type="GO" id="GO:0000049">
    <property type="term" value="F:tRNA binding"/>
    <property type="evidence" value="ECO:0007669"/>
    <property type="project" value="UniProtKB-UniRule"/>
</dbReference>
<dbReference type="GO" id="GO:0006412">
    <property type="term" value="P:translation"/>
    <property type="evidence" value="ECO:0000318"/>
    <property type="project" value="GO_Central"/>
</dbReference>
<dbReference type="FunFam" id="3.30.1440.10:FF:000001">
    <property type="entry name" value="50S ribosomal protein L5"/>
    <property type="match status" value="1"/>
</dbReference>
<dbReference type="Gene3D" id="3.30.1440.10">
    <property type="match status" value="1"/>
</dbReference>
<dbReference type="HAMAP" id="MF_01333_B">
    <property type="entry name" value="Ribosomal_uL5_B"/>
    <property type="match status" value="1"/>
</dbReference>
<dbReference type="InterPro" id="IPR002132">
    <property type="entry name" value="Ribosomal_uL5"/>
</dbReference>
<dbReference type="InterPro" id="IPR020930">
    <property type="entry name" value="Ribosomal_uL5_bac-type"/>
</dbReference>
<dbReference type="InterPro" id="IPR031309">
    <property type="entry name" value="Ribosomal_uL5_C"/>
</dbReference>
<dbReference type="InterPro" id="IPR020929">
    <property type="entry name" value="Ribosomal_uL5_CS"/>
</dbReference>
<dbReference type="InterPro" id="IPR022803">
    <property type="entry name" value="Ribosomal_uL5_dom_sf"/>
</dbReference>
<dbReference type="InterPro" id="IPR031310">
    <property type="entry name" value="Ribosomal_uL5_N"/>
</dbReference>
<dbReference type="NCBIfam" id="NF000585">
    <property type="entry name" value="PRK00010.1"/>
    <property type="match status" value="1"/>
</dbReference>
<dbReference type="PANTHER" id="PTHR11994">
    <property type="entry name" value="60S RIBOSOMAL PROTEIN L11-RELATED"/>
    <property type="match status" value="1"/>
</dbReference>
<dbReference type="Pfam" id="PF00281">
    <property type="entry name" value="Ribosomal_L5"/>
    <property type="match status" value="1"/>
</dbReference>
<dbReference type="Pfam" id="PF00673">
    <property type="entry name" value="Ribosomal_L5_C"/>
    <property type="match status" value="1"/>
</dbReference>
<dbReference type="PIRSF" id="PIRSF002161">
    <property type="entry name" value="Ribosomal_L5"/>
    <property type="match status" value="1"/>
</dbReference>
<dbReference type="SUPFAM" id="SSF55282">
    <property type="entry name" value="RL5-like"/>
    <property type="match status" value="1"/>
</dbReference>
<dbReference type="PROSITE" id="PS00358">
    <property type="entry name" value="RIBOSOMAL_L5"/>
    <property type="match status" value="1"/>
</dbReference>
<gene>
    <name evidence="1" type="primary">rplE</name>
    <name type="ordered locus">VC_2584</name>
</gene>
<organism>
    <name type="scientific">Vibrio cholerae serotype O1 (strain ATCC 39315 / El Tor Inaba N16961)</name>
    <dbReference type="NCBI Taxonomy" id="243277"/>
    <lineage>
        <taxon>Bacteria</taxon>
        <taxon>Pseudomonadati</taxon>
        <taxon>Pseudomonadota</taxon>
        <taxon>Gammaproteobacteria</taxon>
        <taxon>Vibrionales</taxon>
        <taxon>Vibrionaceae</taxon>
        <taxon>Vibrio</taxon>
    </lineage>
</organism>
<reference key="1">
    <citation type="journal article" date="2000" name="Nature">
        <title>DNA sequence of both chromosomes of the cholera pathogen Vibrio cholerae.</title>
        <authorList>
            <person name="Heidelberg J.F."/>
            <person name="Eisen J.A."/>
            <person name="Nelson W.C."/>
            <person name="Clayton R.A."/>
            <person name="Gwinn M.L."/>
            <person name="Dodson R.J."/>
            <person name="Haft D.H."/>
            <person name="Hickey E.K."/>
            <person name="Peterson J.D."/>
            <person name="Umayam L.A."/>
            <person name="Gill S.R."/>
            <person name="Nelson K.E."/>
            <person name="Read T.D."/>
            <person name="Tettelin H."/>
            <person name="Richardson D.L."/>
            <person name="Ermolaeva M.D."/>
            <person name="Vamathevan J.J."/>
            <person name="Bass S."/>
            <person name="Qin H."/>
            <person name="Dragoi I."/>
            <person name="Sellers P."/>
            <person name="McDonald L.A."/>
            <person name="Utterback T.R."/>
            <person name="Fleischmann R.D."/>
            <person name="Nierman W.C."/>
            <person name="White O."/>
            <person name="Salzberg S.L."/>
            <person name="Smith H.O."/>
            <person name="Colwell R.R."/>
            <person name="Mekalanos J.J."/>
            <person name="Venter J.C."/>
            <person name="Fraser C.M."/>
        </authorList>
    </citation>
    <scope>NUCLEOTIDE SEQUENCE [LARGE SCALE GENOMIC DNA]</scope>
    <source>
        <strain>ATCC 39315 / El Tor Inaba N16961</strain>
    </source>
</reference>
<sequence>MAKLHDYYKSSVVAELTKQFSYTSVMQVPRIEKITLNMGVGEAINDKKLLENAASDMAIISGQKPLITKARKSVAGFKIREGYPIGCKVTLRGERMWDFLERLISIALPRVRDFRGVNGKSFDGRGNYSMGVREQIIFPEIDYDKVDRVRGLDITITTTAGTDEEGRALLAAFNFPFRK</sequence>
<keyword id="KW-1185">Reference proteome</keyword>
<keyword id="KW-0687">Ribonucleoprotein</keyword>
<keyword id="KW-0689">Ribosomal protein</keyword>
<keyword id="KW-0694">RNA-binding</keyword>
<keyword id="KW-0699">rRNA-binding</keyword>
<keyword id="KW-0820">tRNA-binding</keyword>
<proteinExistence type="inferred from homology"/>
<name>RL5_VIBCH</name>
<accession>Q9KNZ6</accession>
<comment type="function">
    <text evidence="1">This is one of the proteins that bind and probably mediate the attachment of the 5S RNA into the large ribosomal subunit, where it forms part of the central protuberance. In the 70S ribosome it contacts protein S13 of the 30S subunit (bridge B1b), connecting the 2 subunits; this bridge is implicated in subunit movement. Contacts the P site tRNA; the 5S rRNA and some of its associated proteins might help stabilize positioning of ribosome-bound tRNAs.</text>
</comment>
<comment type="subunit">
    <text evidence="1">Part of the 50S ribosomal subunit; part of the 5S rRNA/L5/L18/L25 subcomplex. Contacts the 5S rRNA and the P site tRNA. Forms a bridge to the 30S subunit in the 70S ribosome.</text>
</comment>
<comment type="similarity">
    <text evidence="1">Belongs to the universal ribosomal protein uL5 family.</text>
</comment>
<feature type="chain" id="PRO_0000125022" description="Large ribosomal subunit protein uL5">
    <location>
        <begin position="1"/>
        <end position="179"/>
    </location>
</feature>